<name>NUOH_PSEP1</name>
<keyword id="KW-0997">Cell inner membrane</keyword>
<keyword id="KW-1003">Cell membrane</keyword>
<keyword id="KW-0472">Membrane</keyword>
<keyword id="KW-0520">NAD</keyword>
<keyword id="KW-0874">Quinone</keyword>
<keyword id="KW-1278">Translocase</keyword>
<keyword id="KW-0812">Transmembrane</keyword>
<keyword id="KW-1133">Transmembrane helix</keyword>
<keyword id="KW-0830">Ubiquinone</keyword>
<reference key="1">
    <citation type="submission" date="2007-05" db="EMBL/GenBank/DDBJ databases">
        <title>Complete sequence of Pseudomonas putida F1.</title>
        <authorList>
            <consortium name="US DOE Joint Genome Institute"/>
            <person name="Copeland A."/>
            <person name="Lucas S."/>
            <person name="Lapidus A."/>
            <person name="Barry K."/>
            <person name="Detter J.C."/>
            <person name="Glavina del Rio T."/>
            <person name="Hammon N."/>
            <person name="Israni S."/>
            <person name="Dalin E."/>
            <person name="Tice H."/>
            <person name="Pitluck S."/>
            <person name="Chain P."/>
            <person name="Malfatti S."/>
            <person name="Shin M."/>
            <person name="Vergez L."/>
            <person name="Schmutz J."/>
            <person name="Larimer F."/>
            <person name="Land M."/>
            <person name="Hauser L."/>
            <person name="Kyrpides N."/>
            <person name="Lykidis A."/>
            <person name="Parales R."/>
            <person name="Richardson P."/>
        </authorList>
    </citation>
    <scope>NUCLEOTIDE SEQUENCE [LARGE SCALE GENOMIC DNA]</scope>
    <source>
        <strain>ATCC 700007 / DSM 6899 / JCM 31910 / BCRC 17059 / LMG 24140 / F1</strain>
    </source>
</reference>
<proteinExistence type="inferred from homology"/>
<dbReference type="EC" id="7.1.1.-" evidence="1"/>
<dbReference type="EMBL" id="CP000712">
    <property type="protein sequence ID" value="ABQ77896.1"/>
    <property type="molecule type" value="Genomic_DNA"/>
</dbReference>
<dbReference type="SMR" id="A5W186"/>
<dbReference type="KEGG" id="ppf:Pput_1740"/>
<dbReference type="eggNOG" id="COG1005">
    <property type="taxonomic scope" value="Bacteria"/>
</dbReference>
<dbReference type="HOGENOM" id="CLU_015134_0_1_6"/>
<dbReference type="GO" id="GO:0005886">
    <property type="term" value="C:plasma membrane"/>
    <property type="evidence" value="ECO:0007669"/>
    <property type="project" value="UniProtKB-SubCell"/>
</dbReference>
<dbReference type="GO" id="GO:0003954">
    <property type="term" value="F:NADH dehydrogenase activity"/>
    <property type="evidence" value="ECO:0007669"/>
    <property type="project" value="TreeGrafter"/>
</dbReference>
<dbReference type="GO" id="GO:0016655">
    <property type="term" value="F:oxidoreductase activity, acting on NAD(P)H, quinone or similar compound as acceptor"/>
    <property type="evidence" value="ECO:0007669"/>
    <property type="project" value="UniProtKB-UniRule"/>
</dbReference>
<dbReference type="GO" id="GO:0048038">
    <property type="term" value="F:quinone binding"/>
    <property type="evidence" value="ECO:0007669"/>
    <property type="project" value="UniProtKB-KW"/>
</dbReference>
<dbReference type="GO" id="GO:0009060">
    <property type="term" value="P:aerobic respiration"/>
    <property type="evidence" value="ECO:0007669"/>
    <property type="project" value="TreeGrafter"/>
</dbReference>
<dbReference type="HAMAP" id="MF_01350">
    <property type="entry name" value="NDH1_NuoH"/>
    <property type="match status" value="1"/>
</dbReference>
<dbReference type="InterPro" id="IPR001694">
    <property type="entry name" value="NADH_UbQ_OxRdtase_su1/FPO"/>
</dbReference>
<dbReference type="InterPro" id="IPR018086">
    <property type="entry name" value="NADH_UbQ_OxRdtase_su1_CS"/>
</dbReference>
<dbReference type="NCBIfam" id="NF004740">
    <property type="entry name" value="PRK06076.1-1"/>
    <property type="match status" value="1"/>
</dbReference>
<dbReference type="NCBIfam" id="NF004741">
    <property type="entry name" value="PRK06076.1-2"/>
    <property type="match status" value="1"/>
</dbReference>
<dbReference type="PANTHER" id="PTHR11432">
    <property type="entry name" value="NADH DEHYDROGENASE SUBUNIT 1"/>
    <property type="match status" value="1"/>
</dbReference>
<dbReference type="PANTHER" id="PTHR11432:SF3">
    <property type="entry name" value="NADH-UBIQUINONE OXIDOREDUCTASE CHAIN 1"/>
    <property type="match status" value="1"/>
</dbReference>
<dbReference type="Pfam" id="PF00146">
    <property type="entry name" value="NADHdh"/>
    <property type="match status" value="1"/>
</dbReference>
<dbReference type="PROSITE" id="PS00667">
    <property type="entry name" value="COMPLEX1_ND1_1"/>
    <property type="match status" value="1"/>
</dbReference>
<dbReference type="PROSITE" id="PS00668">
    <property type="entry name" value="COMPLEX1_ND1_2"/>
    <property type="match status" value="1"/>
</dbReference>
<evidence type="ECO:0000255" key="1">
    <source>
        <dbReference type="HAMAP-Rule" id="MF_01350"/>
    </source>
</evidence>
<accession>A5W186</accession>
<feature type="chain" id="PRO_1000067753" description="NADH-quinone oxidoreductase subunit H">
    <location>
        <begin position="1"/>
        <end position="335"/>
    </location>
</feature>
<feature type="transmembrane region" description="Helical" evidence="1">
    <location>
        <begin position="11"/>
        <end position="31"/>
    </location>
</feature>
<feature type="transmembrane region" description="Helical" evidence="1">
    <location>
        <begin position="81"/>
        <end position="101"/>
    </location>
</feature>
<feature type="transmembrane region" description="Helical" evidence="1">
    <location>
        <begin position="114"/>
        <end position="134"/>
    </location>
</feature>
<feature type="transmembrane region" description="Helical" evidence="1">
    <location>
        <begin position="154"/>
        <end position="174"/>
    </location>
</feature>
<feature type="transmembrane region" description="Helical" evidence="1">
    <location>
        <begin position="187"/>
        <end position="207"/>
    </location>
</feature>
<feature type="transmembrane region" description="Helical" evidence="1">
    <location>
        <begin position="238"/>
        <end position="258"/>
    </location>
</feature>
<feature type="transmembrane region" description="Helical" evidence="1">
    <location>
        <begin position="270"/>
        <end position="290"/>
    </location>
</feature>
<feature type="transmembrane region" description="Helical" evidence="1">
    <location>
        <begin position="307"/>
        <end position="327"/>
    </location>
</feature>
<organism>
    <name type="scientific">Pseudomonas putida (strain ATCC 700007 / DSM 6899 / JCM 31910 / BCRC 17059 / LMG 24140 / F1)</name>
    <dbReference type="NCBI Taxonomy" id="351746"/>
    <lineage>
        <taxon>Bacteria</taxon>
        <taxon>Pseudomonadati</taxon>
        <taxon>Pseudomonadota</taxon>
        <taxon>Gammaproteobacteria</taxon>
        <taxon>Pseudomonadales</taxon>
        <taxon>Pseudomonadaceae</taxon>
        <taxon>Pseudomonas</taxon>
    </lineage>
</organism>
<protein>
    <recommendedName>
        <fullName evidence="1">NADH-quinone oxidoreductase subunit H</fullName>
        <ecNumber evidence="1">7.1.1.-</ecNumber>
    </recommendedName>
    <alternativeName>
        <fullName evidence="1">NADH dehydrogenase I subunit H</fullName>
    </alternativeName>
    <alternativeName>
        <fullName evidence="1">NDH-1 subunit H</fullName>
    </alternativeName>
</protein>
<comment type="function">
    <text evidence="1">NDH-1 shuttles electrons from NADH, via FMN and iron-sulfur (Fe-S) centers, to quinones in the respiratory chain. The immediate electron acceptor for the enzyme in this species is believed to be ubiquinone. Couples the redox reaction to proton translocation (for every two electrons transferred, four hydrogen ions are translocated across the cytoplasmic membrane), and thus conserves the redox energy in a proton gradient. This subunit may bind ubiquinone.</text>
</comment>
<comment type="catalytic activity">
    <reaction evidence="1">
        <text>a quinone + NADH + 5 H(+)(in) = a quinol + NAD(+) + 4 H(+)(out)</text>
        <dbReference type="Rhea" id="RHEA:57888"/>
        <dbReference type="ChEBI" id="CHEBI:15378"/>
        <dbReference type="ChEBI" id="CHEBI:24646"/>
        <dbReference type="ChEBI" id="CHEBI:57540"/>
        <dbReference type="ChEBI" id="CHEBI:57945"/>
        <dbReference type="ChEBI" id="CHEBI:132124"/>
    </reaction>
</comment>
<comment type="subunit">
    <text evidence="1">NDH-1 is composed of 13 different subunits. Subunits NuoA, H, J, K, L, M, N constitute the membrane sector of the complex.</text>
</comment>
<comment type="subcellular location">
    <subcellularLocation>
        <location evidence="1">Cell inner membrane</location>
        <topology evidence="1">Multi-pass membrane protein</topology>
    </subcellularLocation>
</comment>
<comment type="similarity">
    <text evidence="1">Belongs to the complex I subunit 1 family.</text>
</comment>
<sequence length="335" mass="37638">MSWFTPEVIDVILTVLRAIVVLLAVVVCGALLSFVERRLLGWWQDRYGPNRVGPFGMFQIAADMLKMFFKEDWNPPFVDRVIFTLAPVVAMSALLIAFVVIPITPTWGVADLNIGLLFFFAMAGLSVYAVLFAGWSSNNKYALLGSLRASAQTVSYEVFLGLALMGVVVQVGSFNMRDIVEYQAQNLWFIIPQFFGFCTFFIAGVAVTHRHPFDQPEAEQELADGYHIEYAGMKWGMFFVGEYIGIILISALLVTLFFGGWHGPFGILPQLSFLWFALKTAFFIMLFILLRASIPRPRYDQVMDFSWKFCLPLTLINLLVTAAIVLYNTPAVAAQ</sequence>
<gene>
    <name evidence="1" type="primary">nuoH</name>
    <name type="ordered locus">Pput_1740</name>
</gene>